<comment type="function">
    <text evidence="1">One of the primary rRNA binding proteins, it binds directly to 16S rRNA where it nucleates assembly of the body of the 30S subunit.</text>
</comment>
<comment type="function">
    <text evidence="1">With S5 and S12 plays an important role in translational accuracy.</text>
</comment>
<comment type="subunit">
    <text evidence="1">Part of the 30S ribosomal subunit. Contacts protein S5. The interaction surface between S4 and S5 is involved in control of translational fidelity.</text>
</comment>
<comment type="subcellular location">
    <subcellularLocation>
        <location evidence="1 2">Plastid</location>
        <location evidence="1 2">Chloroplast</location>
    </subcellularLocation>
</comment>
<comment type="similarity">
    <text evidence="1">Belongs to the universal ribosomal protein uS4 family.</text>
</comment>
<name>RR4B_CYACA</name>
<gene>
    <name evidence="1" type="primary">rps4</name>
</gene>
<dbReference type="EMBL" id="D63676">
    <property type="protein sequence ID" value="BAA22825.1"/>
    <property type="molecule type" value="Genomic_DNA"/>
</dbReference>
<dbReference type="SMR" id="O22029"/>
<dbReference type="GO" id="GO:0009507">
    <property type="term" value="C:chloroplast"/>
    <property type="evidence" value="ECO:0007669"/>
    <property type="project" value="UniProtKB-SubCell"/>
</dbReference>
<dbReference type="GO" id="GO:0015935">
    <property type="term" value="C:small ribosomal subunit"/>
    <property type="evidence" value="ECO:0007669"/>
    <property type="project" value="InterPro"/>
</dbReference>
<dbReference type="GO" id="GO:0019843">
    <property type="term" value="F:rRNA binding"/>
    <property type="evidence" value="ECO:0007669"/>
    <property type="project" value="UniProtKB-UniRule"/>
</dbReference>
<dbReference type="GO" id="GO:0003735">
    <property type="term" value="F:structural constituent of ribosome"/>
    <property type="evidence" value="ECO:0007669"/>
    <property type="project" value="InterPro"/>
</dbReference>
<dbReference type="GO" id="GO:0042274">
    <property type="term" value="P:ribosomal small subunit biogenesis"/>
    <property type="evidence" value="ECO:0007669"/>
    <property type="project" value="TreeGrafter"/>
</dbReference>
<dbReference type="GO" id="GO:0006412">
    <property type="term" value="P:translation"/>
    <property type="evidence" value="ECO:0007669"/>
    <property type="project" value="UniProtKB-UniRule"/>
</dbReference>
<dbReference type="CDD" id="cd00165">
    <property type="entry name" value="S4"/>
    <property type="match status" value="1"/>
</dbReference>
<dbReference type="FunFam" id="1.10.1050.10:FF:000002">
    <property type="entry name" value="30S ribosomal protein S4, chloroplastic"/>
    <property type="match status" value="1"/>
</dbReference>
<dbReference type="Gene3D" id="1.10.1050.10">
    <property type="entry name" value="Ribosomal Protein S4 Delta 41, Chain A, domain 1"/>
    <property type="match status" value="1"/>
</dbReference>
<dbReference type="Gene3D" id="3.10.290.10">
    <property type="entry name" value="RNA-binding S4 domain"/>
    <property type="match status" value="1"/>
</dbReference>
<dbReference type="HAMAP" id="MF_01306_B">
    <property type="entry name" value="Ribosomal_uS4_B"/>
    <property type="match status" value="1"/>
</dbReference>
<dbReference type="InterPro" id="IPR022801">
    <property type="entry name" value="Ribosomal_uS4"/>
</dbReference>
<dbReference type="InterPro" id="IPR005709">
    <property type="entry name" value="Ribosomal_uS4_bac-type"/>
</dbReference>
<dbReference type="InterPro" id="IPR018079">
    <property type="entry name" value="Ribosomal_uS4_CS"/>
</dbReference>
<dbReference type="InterPro" id="IPR001912">
    <property type="entry name" value="Ribosomal_uS4_N"/>
</dbReference>
<dbReference type="InterPro" id="IPR002942">
    <property type="entry name" value="S4_RNA-bd"/>
</dbReference>
<dbReference type="InterPro" id="IPR036986">
    <property type="entry name" value="S4_RNA-bd_sf"/>
</dbReference>
<dbReference type="NCBIfam" id="NF003717">
    <property type="entry name" value="PRK05327.1"/>
    <property type="match status" value="1"/>
</dbReference>
<dbReference type="NCBIfam" id="TIGR01017">
    <property type="entry name" value="rpsD_bact"/>
    <property type="match status" value="1"/>
</dbReference>
<dbReference type="PANTHER" id="PTHR11831">
    <property type="entry name" value="30S 40S RIBOSOMAL PROTEIN"/>
    <property type="match status" value="1"/>
</dbReference>
<dbReference type="PANTHER" id="PTHR11831:SF4">
    <property type="entry name" value="SMALL RIBOSOMAL SUBUNIT PROTEIN US4M"/>
    <property type="match status" value="1"/>
</dbReference>
<dbReference type="Pfam" id="PF00163">
    <property type="entry name" value="Ribosomal_S4"/>
    <property type="match status" value="1"/>
</dbReference>
<dbReference type="Pfam" id="PF01479">
    <property type="entry name" value="S4"/>
    <property type="match status" value="1"/>
</dbReference>
<dbReference type="SMART" id="SM01390">
    <property type="entry name" value="Ribosomal_S4"/>
    <property type="match status" value="1"/>
</dbReference>
<dbReference type="SMART" id="SM00363">
    <property type="entry name" value="S4"/>
    <property type="match status" value="1"/>
</dbReference>
<dbReference type="SUPFAM" id="SSF55174">
    <property type="entry name" value="Alpha-L RNA-binding motif"/>
    <property type="match status" value="1"/>
</dbReference>
<dbReference type="PROSITE" id="PS00632">
    <property type="entry name" value="RIBOSOMAL_S4"/>
    <property type="match status" value="1"/>
</dbReference>
<dbReference type="PROSITE" id="PS50889">
    <property type="entry name" value="S4"/>
    <property type="match status" value="1"/>
</dbReference>
<organism>
    <name type="scientific">Cyanidium caldarium</name>
    <name type="common">Red alga</name>
    <dbReference type="NCBI Taxonomy" id="2771"/>
    <lineage>
        <taxon>Eukaryota</taxon>
        <taxon>Rhodophyta</taxon>
        <taxon>Bangiophyceae</taxon>
        <taxon>Cyanidiales</taxon>
        <taxon>Cyanidiaceae</taxon>
        <taxon>Cyanidium</taxon>
    </lineage>
</organism>
<evidence type="ECO:0000255" key="1">
    <source>
        <dbReference type="HAMAP-Rule" id="MF_01306"/>
    </source>
</evidence>
<evidence type="ECO:0000305" key="2"/>
<proteinExistence type="inferred from homology"/>
<accession>O22029</accession>
<keyword id="KW-0150">Chloroplast</keyword>
<keyword id="KW-0934">Plastid</keyword>
<keyword id="KW-0687">Ribonucleoprotein</keyword>
<keyword id="KW-0689">Ribosomal protein</keyword>
<keyword id="KW-0694">RNA-binding</keyword>
<keyword id="KW-0699">rRNA-binding</keyword>
<reference key="1">
    <citation type="journal article" date="1997" name="J. Plant Res.">
        <title>Analysis of a plastid gene cluster reveals a close relationship between Cyanidioschyzon and Cyanidium.</title>
        <authorList>
            <person name="Ohta N."/>
        </authorList>
    </citation>
    <scope>NUCLEOTIDE SEQUENCE [GENOMIC DNA]</scope>
    <source>
        <strain>RK-1</strain>
    </source>
</reference>
<geneLocation type="chloroplast"/>
<sequence length="192" mass="21705">MSRYLGPRVRVIRRLGALPALTNKSPKKRTIAPGEHAHKTRKLSEFAVQLQEKQKLQYYYGITNSQLARYFRQARRSKSSTGLALLTMLETRLDHLVYRAGFAPTLPAARQLVNHGHVKVNGKKVTIASWACEVNHVIEVKSSSPPKPPEYLPPYLQLSNGTLTVTQPVQKEWLAFVVNELLVVEYYTRVGA</sequence>
<feature type="chain" id="PRO_0000132562" description="Small ribosomal subunit protein uS4c-2">
    <location>
        <begin position="1"/>
        <end position="192"/>
    </location>
</feature>
<feature type="domain" description="S4 RNA-binding" evidence="1">
    <location>
        <begin position="91"/>
        <end position="155"/>
    </location>
</feature>
<protein>
    <recommendedName>
        <fullName evidence="1 2">Small ribosomal subunit protein uS4c-2</fullName>
    </recommendedName>
    <alternativeName>
        <fullName evidence="2">30S ribosomal protein S4, chloroplastic</fullName>
    </alternativeName>
</protein>